<sequence length="322" mass="36763">MGMLARVALGLIIIDAVLAAPTTELFNYDSEVYDAILEDTGTFYNYEHIPDNHVENEKVSERLSGNRELLTPGPQLGDNQDEDKDEESTPRLIDGSSPQEPEFPGLLGPHTNEDFPTCLLCTCISTTVYCDDHELDAIPPLPKKTTYFYSRFNRIKKINKNDFASLNDLKRIDLTSNLISEIDEDAFRKLPHLQELVLRDNKIKQLPELPNTLTFIDISNNRLGRKGIKQEAFKDMYDLHHLYITDNSLDHIPLPLPESLRALHLQNNDILEMHEDTFCNVKNLTYVRKALEDIRLDGNPINLSRTPQAYMCLPRLPIGSFI</sequence>
<name>EPYC_MOUSE</name>
<accession>P70186</accession>
<proteinExistence type="evidence at transcript level"/>
<evidence type="ECO:0000250" key="1"/>
<evidence type="ECO:0000250" key="2">
    <source>
        <dbReference type="UniProtKB" id="P79119"/>
    </source>
</evidence>
<evidence type="ECO:0000255" key="3"/>
<evidence type="ECO:0000256" key="4">
    <source>
        <dbReference type="SAM" id="MobiDB-lite"/>
    </source>
</evidence>
<evidence type="ECO:0000269" key="5">
    <source>
    </source>
</evidence>
<evidence type="ECO:0000305" key="6"/>
<comment type="function">
    <text>May have a role in bone formation and also in establishing the ordered structure of cartilage through matrix organization.</text>
</comment>
<comment type="subcellular location">
    <subcellularLocation>
        <location>Secreted</location>
        <location>Extracellular space</location>
        <location>Extracellular matrix</location>
    </subcellularLocation>
    <text>Surrounding resting, proliferating, and hypertrophic chondrocytes.</text>
</comment>
<comment type="tissue specificity">
    <text evidence="5">Confined to the middle zone of embryonic epiphyseal cartilage consisting of flattened chondrocytes and the ossifying region in the limb buds of chick embryos. Has also been detected in testis.</text>
</comment>
<comment type="developmental stage">
    <text>Expression starts at 12.5 dpc and is restricted to developing cartilage.</text>
</comment>
<comment type="PTM">
    <text evidence="2">The O-linked polysaccharide on Ser-96 is probably the mucin type linked to GalNAc. There is one glycosaminoglycan chain, known to be dermatan sulfate, and it is probably the O-glycosylation at Ser-64.</text>
</comment>
<comment type="similarity">
    <text evidence="6">Belongs to the small leucine-rich proteoglycan (SLRP) family. SLRP class III subfamily.</text>
</comment>
<reference key="1">
    <citation type="journal article" date="1996" name="Biochem. J.">
        <title>Occurrence of PG-Lb, a leucine-rich small chondroitin/dermatan sulphate proteoglycan in mammalian epiphyseal cartilage: molecular cloning and sequence analysis of the mouse cDNA.</title>
        <authorList>
            <person name="Kurita K."/>
            <person name="Shinomura T."/>
            <person name="Ujita M."/>
            <person name="Zako M."/>
            <person name="Kida D."/>
            <person name="Iwata H."/>
            <person name="Kimata K."/>
        </authorList>
    </citation>
    <scope>NUCLEOTIDE SEQUENCE [MRNA]</scope>
    <scope>TISSUE SPECIFICITY</scope>
    <source>
        <strain>BALB/cJ</strain>
        <tissue>Epiphyseal cartilage</tissue>
    </source>
</reference>
<reference key="2">
    <citation type="journal article" date="2005" name="Science">
        <title>The transcriptional landscape of the mammalian genome.</title>
        <authorList>
            <person name="Carninci P."/>
            <person name="Kasukawa T."/>
            <person name="Katayama S."/>
            <person name="Gough J."/>
            <person name="Frith M.C."/>
            <person name="Maeda N."/>
            <person name="Oyama R."/>
            <person name="Ravasi T."/>
            <person name="Lenhard B."/>
            <person name="Wells C."/>
            <person name="Kodzius R."/>
            <person name="Shimokawa K."/>
            <person name="Bajic V.B."/>
            <person name="Brenner S.E."/>
            <person name="Batalov S."/>
            <person name="Forrest A.R."/>
            <person name="Zavolan M."/>
            <person name="Davis M.J."/>
            <person name="Wilming L.G."/>
            <person name="Aidinis V."/>
            <person name="Allen J.E."/>
            <person name="Ambesi-Impiombato A."/>
            <person name="Apweiler R."/>
            <person name="Aturaliya R.N."/>
            <person name="Bailey T.L."/>
            <person name="Bansal M."/>
            <person name="Baxter L."/>
            <person name="Beisel K.W."/>
            <person name="Bersano T."/>
            <person name="Bono H."/>
            <person name="Chalk A.M."/>
            <person name="Chiu K.P."/>
            <person name="Choudhary V."/>
            <person name="Christoffels A."/>
            <person name="Clutterbuck D.R."/>
            <person name="Crowe M.L."/>
            <person name="Dalla E."/>
            <person name="Dalrymple B.P."/>
            <person name="de Bono B."/>
            <person name="Della Gatta G."/>
            <person name="di Bernardo D."/>
            <person name="Down T."/>
            <person name="Engstrom P."/>
            <person name="Fagiolini M."/>
            <person name="Faulkner G."/>
            <person name="Fletcher C.F."/>
            <person name="Fukushima T."/>
            <person name="Furuno M."/>
            <person name="Futaki S."/>
            <person name="Gariboldi M."/>
            <person name="Georgii-Hemming P."/>
            <person name="Gingeras T.R."/>
            <person name="Gojobori T."/>
            <person name="Green R.E."/>
            <person name="Gustincich S."/>
            <person name="Harbers M."/>
            <person name="Hayashi Y."/>
            <person name="Hensch T.K."/>
            <person name="Hirokawa N."/>
            <person name="Hill D."/>
            <person name="Huminiecki L."/>
            <person name="Iacono M."/>
            <person name="Ikeo K."/>
            <person name="Iwama A."/>
            <person name="Ishikawa T."/>
            <person name="Jakt M."/>
            <person name="Kanapin A."/>
            <person name="Katoh M."/>
            <person name="Kawasawa Y."/>
            <person name="Kelso J."/>
            <person name="Kitamura H."/>
            <person name="Kitano H."/>
            <person name="Kollias G."/>
            <person name="Krishnan S.P."/>
            <person name="Kruger A."/>
            <person name="Kummerfeld S.K."/>
            <person name="Kurochkin I.V."/>
            <person name="Lareau L.F."/>
            <person name="Lazarevic D."/>
            <person name="Lipovich L."/>
            <person name="Liu J."/>
            <person name="Liuni S."/>
            <person name="McWilliam S."/>
            <person name="Madan Babu M."/>
            <person name="Madera M."/>
            <person name="Marchionni L."/>
            <person name="Matsuda H."/>
            <person name="Matsuzawa S."/>
            <person name="Miki H."/>
            <person name="Mignone F."/>
            <person name="Miyake S."/>
            <person name="Morris K."/>
            <person name="Mottagui-Tabar S."/>
            <person name="Mulder N."/>
            <person name="Nakano N."/>
            <person name="Nakauchi H."/>
            <person name="Ng P."/>
            <person name="Nilsson R."/>
            <person name="Nishiguchi S."/>
            <person name="Nishikawa S."/>
            <person name="Nori F."/>
            <person name="Ohara O."/>
            <person name="Okazaki Y."/>
            <person name="Orlando V."/>
            <person name="Pang K.C."/>
            <person name="Pavan W.J."/>
            <person name="Pavesi G."/>
            <person name="Pesole G."/>
            <person name="Petrovsky N."/>
            <person name="Piazza S."/>
            <person name="Reed J."/>
            <person name="Reid J.F."/>
            <person name="Ring B.Z."/>
            <person name="Ringwald M."/>
            <person name="Rost B."/>
            <person name="Ruan Y."/>
            <person name="Salzberg S.L."/>
            <person name="Sandelin A."/>
            <person name="Schneider C."/>
            <person name="Schoenbach C."/>
            <person name="Sekiguchi K."/>
            <person name="Semple C.A."/>
            <person name="Seno S."/>
            <person name="Sessa L."/>
            <person name="Sheng Y."/>
            <person name="Shibata Y."/>
            <person name="Shimada H."/>
            <person name="Shimada K."/>
            <person name="Silva D."/>
            <person name="Sinclair B."/>
            <person name="Sperling S."/>
            <person name="Stupka E."/>
            <person name="Sugiura K."/>
            <person name="Sultana R."/>
            <person name="Takenaka Y."/>
            <person name="Taki K."/>
            <person name="Tammoja K."/>
            <person name="Tan S.L."/>
            <person name="Tang S."/>
            <person name="Taylor M.S."/>
            <person name="Tegner J."/>
            <person name="Teichmann S.A."/>
            <person name="Ueda H.R."/>
            <person name="van Nimwegen E."/>
            <person name="Verardo R."/>
            <person name="Wei C.L."/>
            <person name="Yagi K."/>
            <person name="Yamanishi H."/>
            <person name="Zabarovsky E."/>
            <person name="Zhu S."/>
            <person name="Zimmer A."/>
            <person name="Hide W."/>
            <person name="Bult C."/>
            <person name="Grimmond S.M."/>
            <person name="Teasdale R.D."/>
            <person name="Liu E.T."/>
            <person name="Brusic V."/>
            <person name="Quackenbush J."/>
            <person name="Wahlestedt C."/>
            <person name="Mattick J.S."/>
            <person name="Hume D.A."/>
            <person name="Kai C."/>
            <person name="Sasaki D."/>
            <person name="Tomaru Y."/>
            <person name="Fukuda S."/>
            <person name="Kanamori-Katayama M."/>
            <person name="Suzuki M."/>
            <person name="Aoki J."/>
            <person name="Arakawa T."/>
            <person name="Iida J."/>
            <person name="Imamura K."/>
            <person name="Itoh M."/>
            <person name="Kato T."/>
            <person name="Kawaji H."/>
            <person name="Kawagashira N."/>
            <person name="Kawashima T."/>
            <person name="Kojima M."/>
            <person name="Kondo S."/>
            <person name="Konno H."/>
            <person name="Nakano K."/>
            <person name="Ninomiya N."/>
            <person name="Nishio T."/>
            <person name="Okada M."/>
            <person name="Plessy C."/>
            <person name="Shibata K."/>
            <person name="Shiraki T."/>
            <person name="Suzuki S."/>
            <person name="Tagami M."/>
            <person name="Waki K."/>
            <person name="Watahiki A."/>
            <person name="Okamura-Oho Y."/>
            <person name="Suzuki H."/>
            <person name="Kawai J."/>
            <person name="Hayashizaki Y."/>
        </authorList>
    </citation>
    <scope>NUCLEOTIDE SEQUENCE [LARGE SCALE MRNA]</scope>
    <source>
        <strain>C57BL/6J</strain>
        <tissue>Testis</tissue>
    </source>
</reference>
<reference key="3">
    <citation type="journal article" date="2004" name="Genome Res.">
        <title>The status, quality, and expansion of the NIH full-length cDNA project: the Mammalian Gene Collection (MGC).</title>
        <authorList>
            <consortium name="The MGC Project Team"/>
        </authorList>
    </citation>
    <scope>NUCLEOTIDE SEQUENCE [LARGE SCALE MRNA]</scope>
    <source>
        <tissue>Mammary gland</tissue>
    </source>
</reference>
<reference key="4">
    <citation type="journal article" date="1998" name="Biochem. J.">
        <title>The gene structure and organization of mouse PG-Lb, a small chondroitin/dermatan sulphate proteoglycan.</title>
        <authorList>
            <person name="Iwata Y."/>
            <person name="Shinomura T."/>
            <person name="Kurita K."/>
            <person name="Zako M."/>
            <person name="Kimata K."/>
        </authorList>
    </citation>
    <scope>NUCLEOTIDE SEQUENCE [GENOMIC DNA] OF 1-55</scope>
    <source>
        <strain>129/Sv</strain>
    </source>
</reference>
<reference key="5">
    <citation type="journal article" date="1999" name="Dev. Dyn.">
        <title>Expression and localization of PG-Lb/epiphycan during mouse development.</title>
        <authorList>
            <person name="Johnson H.J."/>
            <person name="Shinomura T."/>
            <person name="Eberspaecher H."/>
            <person name="Pinero G."/>
            <person name="Decrombrugghe B."/>
            <person name="Hoeoek M."/>
        </authorList>
    </citation>
    <scope>EXPRESSION DURING DEVELOPMENT</scope>
</reference>
<feature type="signal peptide" evidence="3">
    <location>
        <begin position="1"/>
        <end position="19"/>
    </location>
</feature>
<feature type="chain" id="PRO_0000032769" description="Epiphycan">
    <location>
        <begin position="20"/>
        <end position="322"/>
    </location>
</feature>
<feature type="domain" description="LRRNT">
    <location>
        <begin position="106"/>
        <end position="143"/>
    </location>
</feature>
<feature type="repeat" description="LRR 1">
    <location>
        <begin position="144"/>
        <end position="165"/>
    </location>
</feature>
<feature type="repeat" description="LRR 2">
    <location>
        <begin position="168"/>
        <end position="189"/>
    </location>
</feature>
<feature type="repeat" description="LRR 3">
    <location>
        <begin position="192"/>
        <end position="213"/>
    </location>
</feature>
<feature type="repeat" description="LRR 4">
    <location>
        <begin position="238"/>
        <end position="258"/>
    </location>
</feature>
<feature type="repeat" description="LRR 5">
    <location>
        <begin position="259"/>
        <end position="280"/>
    </location>
</feature>
<feature type="repeat" description="LRR 6">
    <location>
        <begin position="290"/>
        <end position="310"/>
    </location>
</feature>
<feature type="region of interest" description="Disordered" evidence="4">
    <location>
        <begin position="58"/>
        <end position="108"/>
    </location>
</feature>
<feature type="glycosylation site" description="O-linked (Xyl...) (dermatan sulfate) serine" evidence="2">
    <location>
        <position position="64"/>
    </location>
</feature>
<feature type="glycosylation site" description="O-linked (GalNAc...) serine" evidence="2">
    <location>
        <position position="96"/>
    </location>
</feature>
<feature type="glycosylation site" description="N-linked (GlcNAc...) asparagine" evidence="3">
    <location>
        <position position="283"/>
    </location>
</feature>
<feature type="glycosylation site" description="N-linked (GlcNAc...) asparagine" evidence="3">
    <location>
        <position position="302"/>
    </location>
</feature>
<feature type="disulfide bond" evidence="1">
    <location>
        <begin position="118"/>
        <end position="130"/>
    </location>
</feature>
<feature type="disulfide bond" evidence="1">
    <location>
        <begin position="279"/>
        <end position="312"/>
    </location>
</feature>
<dbReference type="EMBL" id="D78274">
    <property type="protein sequence ID" value="BAA11337.1"/>
    <property type="molecule type" value="mRNA"/>
</dbReference>
<dbReference type="EMBL" id="D87187">
    <property type="protein sequence ID" value="BAA28770.1"/>
    <property type="molecule type" value="Genomic_DNA"/>
</dbReference>
<dbReference type="EMBL" id="BC012695">
    <property type="protein sequence ID" value="AAH12695.1"/>
    <property type="molecule type" value="mRNA"/>
</dbReference>
<dbReference type="EMBL" id="AK015223">
    <property type="protein sequence ID" value="BAB29756.1"/>
    <property type="molecule type" value="mRNA"/>
</dbReference>
<dbReference type="CCDS" id="CCDS24143.1"/>
<dbReference type="PIR" id="S72271">
    <property type="entry name" value="S72271"/>
</dbReference>
<dbReference type="RefSeq" id="NP_001366385.1">
    <property type="nucleotide sequence ID" value="NM_001379456.1"/>
</dbReference>
<dbReference type="RefSeq" id="NP_031910.1">
    <property type="nucleotide sequence ID" value="NM_007884.2"/>
</dbReference>
<dbReference type="SMR" id="P70186"/>
<dbReference type="FunCoup" id="P70186">
    <property type="interactions" value="51"/>
</dbReference>
<dbReference type="STRING" id="10090.ENSMUSP00000100922"/>
<dbReference type="GlyCosmos" id="P70186">
    <property type="glycosylation" value="4 sites, No reported glycans"/>
</dbReference>
<dbReference type="GlyGen" id="P70186">
    <property type="glycosylation" value="4 sites"/>
</dbReference>
<dbReference type="iPTMnet" id="P70186"/>
<dbReference type="PhosphoSitePlus" id="P70186"/>
<dbReference type="jPOST" id="P70186"/>
<dbReference type="PaxDb" id="10090-ENSMUSP00000100922"/>
<dbReference type="ProteomicsDB" id="275875"/>
<dbReference type="Antibodypedia" id="29993">
    <property type="antibodies" value="122 antibodies from 22 providers"/>
</dbReference>
<dbReference type="Ensembl" id="ENSMUST00000020094.8">
    <property type="protein sequence ID" value="ENSMUSP00000020094.2"/>
    <property type="gene ID" value="ENSMUSG00000019936.11"/>
</dbReference>
<dbReference type="Ensembl" id="ENSMUST00000105285.4">
    <property type="protein sequence ID" value="ENSMUSP00000100922.4"/>
    <property type="gene ID" value="ENSMUSG00000019936.11"/>
</dbReference>
<dbReference type="GeneID" id="13516"/>
<dbReference type="KEGG" id="mmu:13516"/>
<dbReference type="UCSC" id="uc007gxb.1">
    <property type="organism name" value="mouse"/>
</dbReference>
<dbReference type="AGR" id="MGI:107942"/>
<dbReference type="CTD" id="1833"/>
<dbReference type="MGI" id="MGI:107942">
    <property type="gene designation" value="Epyc"/>
</dbReference>
<dbReference type="VEuPathDB" id="HostDB:ENSMUSG00000019936"/>
<dbReference type="eggNOG" id="KOG0619">
    <property type="taxonomic scope" value="Eukaryota"/>
</dbReference>
<dbReference type="GeneTree" id="ENSGT00940000157574"/>
<dbReference type="HOGENOM" id="CLU_067583_0_0_1"/>
<dbReference type="InParanoid" id="P70186"/>
<dbReference type="OMA" id="EFYDIPL"/>
<dbReference type="OrthoDB" id="676979at2759"/>
<dbReference type="PhylomeDB" id="P70186"/>
<dbReference type="TreeFam" id="TF351924"/>
<dbReference type="BioGRID-ORCS" id="13516">
    <property type="hits" value="4 hits in 78 CRISPR screens"/>
</dbReference>
<dbReference type="ChiTaRS" id="Epyc">
    <property type="organism name" value="mouse"/>
</dbReference>
<dbReference type="PRO" id="PR:P70186"/>
<dbReference type="Proteomes" id="UP000000589">
    <property type="component" value="Chromosome 10"/>
</dbReference>
<dbReference type="RNAct" id="P70186">
    <property type="molecule type" value="protein"/>
</dbReference>
<dbReference type="Bgee" id="ENSMUSG00000019936">
    <property type="expression patterns" value="Expressed in epithelium of cochlear duct and 118 other cell types or tissues"/>
</dbReference>
<dbReference type="GO" id="GO:0031012">
    <property type="term" value="C:extracellular matrix"/>
    <property type="evidence" value="ECO:0000314"/>
    <property type="project" value="MGI"/>
</dbReference>
<dbReference type="GO" id="GO:0005576">
    <property type="term" value="C:extracellular region"/>
    <property type="evidence" value="ECO:0007669"/>
    <property type="project" value="UniProtKB-KW"/>
</dbReference>
<dbReference type="GO" id="GO:0061975">
    <property type="term" value="P:articular cartilage development"/>
    <property type="evidence" value="ECO:0000316"/>
    <property type="project" value="MGI"/>
</dbReference>
<dbReference type="GO" id="GO:0060348">
    <property type="term" value="P:bone development"/>
    <property type="evidence" value="ECO:0000315"/>
    <property type="project" value="MGI"/>
</dbReference>
<dbReference type="GO" id="GO:0007605">
    <property type="term" value="P:sensory perception of sound"/>
    <property type="evidence" value="ECO:0000315"/>
    <property type="project" value="MGI"/>
</dbReference>
<dbReference type="FunFam" id="3.80.10.10:FF:000167">
    <property type="entry name" value="epiphycan"/>
    <property type="match status" value="1"/>
</dbReference>
<dbReference type="Gene3D" id="3.80.10.10">
    <property type="entry name" value="Ribonuclease Inhibitor"/>
    <property type="match status" value="1"/>
</dbReference>
<dbReference type="InterPro" id="IPR001611">
    <property type="entry name" value="Leu-rich_rpt"/>
</dbReference>
<dbReference type="InterPro" id="IPR003591">
    <property type="entry name" value="Leu-rich_rpt_typical-subtyp"/>
</dbReference>
<dbReference type="InterPro" id="IPR032675">
    <property type="entry name" value="LRR_dom_sf"/>
</dbReference>
<dbReference type="InterPro" id="IPR000372">
    <property type="entry name" value="LRRNT"/>
</dbReference>
<dbReference type="InterPro" id="IPR043547">
    <property type="entry name" value="Mimecan/Epiphycan/Opticin"/>
</dbReference>
<dbReference type="PANTHER" id="PTHR46269:SF3">
    <property type="entry name" value="EPIPHYCAN"/>
    <property type="match status" value="1"/>
</dbReference>
<dbReference type="PANTHER" id="PTHR46269">
    <property type="entry name" value="EPIPHYCAN-RELATED"/>
    <property type="match status" value="1"/>
</dbReference>
<dbReference type="Pfam" id="PF13855">
    <property type="entry name" value="LRR_8"/>
    <property type="match status" value="1"/>
</dbReference>
<dbReference type="Pfam" id="PF01462">
    <property type="entry name" value="LRRNT"/>
    <property type="match status" value="1"/>
</dbReference>
<dbReference type="SMART" id="SM00369">
    <property type="entry name" value="LRR_TYP"/>
    <property type="match status" value="3"/>
</dbReference>
<dbReference type="SMART" id="SM00013">
    <property type="entry name" value="LRRNT"/>
    <property type="match status" value="1"/>
</dbReference>
<dbReference type="SUPFAM" id="SSF52058">
    <property type="entry name" value="L domain-like"/>
    <property type="match status" value="1"/>
</dbReference>
<dbReference type="PROSITE" id="PS51450">
    <property type="entry name" value="LRR"/>
    <property type="match status" value="4"/>
</dbReference>
<protein>
    <recommendedName>
        <fullName>Epiphycan</fullName>
    </recommendedName>
    <alternativeName>
        <fullName>Dermatan sulfate proteoglycan 3</fullName>
    </alternativeName>
    <alternativeName>
        <fullName>Proteoglycan-Lb</fullName>
        <shortName>PG-Lb</shortName>
    </alternativeName>
    <alternativeName>
        <fullName>Small chondroitin/dermatan sulfate proteoglycan</fullName>
    </alternativeName>
</protein>
<organism>
    <name type="scientific">Mus musculus</name>
    <name type="common">Mouse</name>
    <dbReference type="NCBI Taxonomy" id="10090"/>
    <lineage>
        <taxon>Eukaryota</taxon>
        <taxon>Metazoa</taxon>
        <taxon>Chordata</taxon>
        <taxon>Craniata</taxon>
        <taxon>Vertebrata</taxon>
        <taxon>Euteleostomi</taxon>
        <taxon>Mammalia</taxon>
        <taxon>Eutheria</taxon>
        <taxon>Euarchontoglires</taxon>
        <taxon>Glires</taxon>
        <taxon>Rodentia</taxon>
        <taxon>Myomorpha</taxon>
        <taxon>Muroidea</taxon>
        <taxon>Muridae</taxon>
        <taxon>Murinae</taxon>
        <taxon>Mus</taxon>
        <taxon>Mus</taxon>
    </lineage>
</organism>
<keyword id="KW-1015">Disulfide bond</keyword>
<keyword id="KW-0272">Extracellular matrix</keyword>
<keyword id="KW-0325">Glycoprotein</keyword>
<keyword id="KW-0433">Leucine-rich repeat</keyword>
<keyword id="KW-0654">Proteoglycan</keyword>
<keyword id="KW-1185">Reference proteome</keyword>
<keyword id="KW-0677">Repeat</keyword>
<keyword id="KW-0964">Secreted</keyword>
<keyword id="KW-0732">Signal</keyword>
<gene>
    <name type="primary">Epyc</name>
    <name type="synonym">Dspg3</name>
    <name type="synonym">Pglb</name>
</gene>